<organism>
    <name type="scientific">Yersinia pestis (strain Pestoides F)</name>
    <dbReference type="NCBI Taxonomy" id="386656"/>
    <lineage>
        <taxon>Bacteria</taxon>
        <taxon>Pseudomonadati</taxon>
        <taxon>Pseudomonadota</taxon>
        <taxon>Gammaproteobacteria</taxon>
        <taxon>Enterobacterales</taxon>
        <taxon>Yersiniaceae</taxon>
        <taxon>Yersinia</taxon>
    </lineage>
</organism>
<gene>
    <name evidence="1" type="primary">yihI</name>
    <name type="ordered locus">YPDSF_3884</name>
</gene>
<evidence type="ECO:0000255" key="1">
    <source>
        <dbReference type="HAMAP-Rule" id="MF_01058"/>
    </source>
</evidence>
<evidence type="ECO:0000256" key="2">
    <source>
        <dbReference type="SAM" id="MobiDB-lite"/>
    </source>
</evidence>
<protein>
    <recommendedName>
        <fullName evidence="1">Der GTPase-activating protein YihI</fullName>
    </recommendedName>
</protein>
<name>YIHI_YERPP</name>
<feature type="chain" id="PRO_1000064439" description="Der GTPase-activating protein YihI">
    <location>
        <begin position="1"/>
        <end position="188"/>
    </location>
</feature>
<feature type="region of interest" description="Disordered" evidence="2">
    <location>
        <begin position="1"/>
        <end position="80"/>
    </location>
</feature>
<feature type="region of interest" description="Disordered" evidence="2">
    <location>
        <begin position="162"/>
        <end position="188"/>
    </location>
</feature>
<feature type="compositionally biased region" description="Basic and acidic residues" evidence="2">
    <location>
        <begin position="27"/>
        <end position="37"/>
    </location>
</feature>
<feature type="compositionally biased region" description="Polar residues" evidence="2">
    <location>
        <begin position="47"/>
        <end position="57"/>
    </location>
</feature>
<keyword id="KW-0343">GTPase activation</keyword>
<keyword id="KW-0690">Ribosome biogenesis</keyword>
<proteinExistence type="inferred from homology"/>
<accession>A4TSG5</accession>
<reference key="1">
    <citation type="submission" date="2007-02" db="EMBL/GenBank/DDBJ databases">
        <title>Complete sequence of chromosome of Yersinia pestis Pestoides F.</title>
        <authorList>
            <consortium name="US DOE Joint Genome Institute"/>
            <person name="Copeland A."/>
            <person name="Lucas S."/>
            <person name="Lapidus A."/>
            <person name="Barry K."/>
            <person name="Detter J.C."/>
            <person name="Glavina del Rio T."/>
            <person name="Hammon N."/>
            <person name="Israni S."/>
            <person name="Dalin E."/>
            <person name="Tice H."/>
            <person name="Pitluck S."/>
            <person name="Di Bartolo G."/>
            <person name="Chain P."/>
            <person name="Malfatti S."/>
            <person name="Shin M."/>
            <person name="Vergez L."/>
            <person name="Schmutz J."/>
            <person name="Larimer F."/>
            <person name="Land M."/>
            <person name="Hauser L."/>
            <person name="Worsham P."/>
            <person name="Chu M."/>
            <person name="Bearden S."/>
            <person name="Garcia E."/>
            <person name="Richardson P."/>
        </authorList>
    </citation>
    <scope>NUCLEOTIDE SEQUENCE [LARGE SCALE GENOMIC DNA]</scope>
    <source>
        <strain>Pestoides F</strain>
    </source>
</reference>
<sequence>MKQPNKAPRANIAAPKGTATPKRRRKTRDELDAEARDRKRQKKHSGNRSGARTNVEGSNKKGHSQTQEKDPRVGSKVPVPLVIESQVKAKSMPKPVEKNVVKPRLTPEEELAKLENDERLDALLDRLDNDEVLNKEDQAYVDLTLDRIDALMEQLGIELGDDEDDVEREEKQEDILQLLKRGNPKDTF</sequence>
<comment type="function">
    <text evidence="1">A GTPase-activating protein (GAP) that modifies Der/EngA GTPase function. May play a role in ribosome biogenesis.</text>
</comment>
<comment type="subunit">
    <text evidence="1">Interacts with Der.</text>
</comment>
<comment type="similarity">
    <text evidence="1">Belongs to the YihI family.</text>
</comment>
<dbReference type="EMBL" id="CP000668">
    <property type="protein sequence ID" value="ABP42227.1"/>
    <property type="molecule type" value="Genomic_DNA"/>
</dbReference>
<dbReference type="RefSeq" id="WP_002213158.1">
    <property type="nucleotide sequence ID" value="NZ_CP009715.1"/>
</dbReference>
<dbReference type="SMR" id="A4TSG5"/>
<dbReference type="GeneID" id="57974569"/>
<dbReference type="KEGG" id="ypp:YPDSF_3884"/>
<dbReference type="PATRIC" id="fig|386656.14.peg.633"/>
<dbReference type="GO" id="GO:0005096">
    <property type="term" value="F:GTPase activator activity"/>
    <property type="evidence" value="ECO:0007669"/>
    <property type="project" value="UniProtKB-KW"/>
</dbReference>
<dbReference type="GO" id="GO:0042254">
    <property type="term" value="P:ribosome biogenesis"/>
    <property type="evidence" value="ECO:0007669"/>
    <property type="project" value="UniProtKB-KW"/>
</dbReference>
<dbReference type="HAMAP" id="MF_01058">
    <property type="entry name" value="GAP_YihI"/>
    <property type="match status" value="1"/>
</dbReference>
<dbReference type="InterPro" id="IPR007336">
    <property type="entry name" value="YihI"/>
</dbReference>
<dbReference type="NCBIfam" id="NF003560">
    <property type="entry name" value="PRK05244.1-1"/>
    <property type="match status" value="1"/>
</dbReference>
<dbReference type="Pfam" id="PF04220">
    <property type="entry name" value="YihI"/>
    <property type="match status" value="1"/>
</dbReference>